<keyword id="KW-0997">Cell inner membrane</keyword>
<keyword id="KW-1003">Cell membrane</keyword>
<keyword id="KW-0472">Membrane</keyword>
<keyword id="KW-0520">NAD</keyword>
<keyword id="KW-0874">Quinone</keyword>
<keyword id="KW-1278">Translocase</keyword>
<keyword id="KW-0812">Transmembrane</keyword>
<keyword id="KW-1133">Transmembrane helix</keyword>
<keyword id="KW-0830">Ubiquinone</keyword>
<feature type="chain" id="PRO_1000143614" description="NADH-quinone oxidoreductase subunit H">
    <location>
        <begin position="1"/>
        <end position="354"/>
    </location>
</feature>
<feature type="transmembrane region" description="Helical" evidence="1">
    <location>
        <begin position="23"/>
        <end position="43"/>
    </location>
</feature>
<feature type="transmembrane region" description="Helical" evidence="1">
    <location>
        <begin position="91"/>
        <end position="111"/>
    </location>
</feature>
<feature type="transmembrane region" description="Helical" evidence="1">
    <location>
        <begin position="124"/>
        <end position="144"/>
    </location>
</feature>
<feature type="transmembrane region" description="Helical" evidence="1">
    <location>
        <begin position="162"/>
        <end position="182"/>
    </location>
</feature>
<feature type="transmembrane region" description="Helical" evidence="1">
    <location>
        <begin position="203"/>
        <end position="223"/>
    </location>
</feature>
<feature type="transmembrane region" description="Helical" evidence="1">
    <location>
        <begin position="250"/>
        <end position="270"/>
    </location>
</feature>
<feature type="transmembrane region" description="Helical" evidence="1">
    <location>
        <begin position="291"/>
        <end position="311"/>
    </location>
</feature>
<feature type="transmembrane region" description="Helical" evidence="1">
    <location>
        <begin position="330"/>
        <end position="350"/>
    </location>
</feature>
<accession>B2U7Q4</accession>
<name>NUOH_RALPJ</name>
<gene>
    <name evidence="1" type="primary">nuoH</name>
    <name type="ordered locus">Rpic_2207</name>
</gene>
<organism>
    <name type="scientific">Ralstonia pickettii (strain 12J)</name>
    <dbReference type="NCBI Taxonomy" id="402626"/>
    <lineage>
        <taxon>Bacteria</taxon>
        <taxon>Pseudomonadati</taxon>
        <taxon>Pseudomonadota</taxon>
        <taxon>Betaproteobacteria</taxon>
        <taxon>Burkholderiales</taxon>
        <taxon>Burkholderiaceae</taxon>
        <taxon>Ralstonia</taxon>
    </lineage>
</organism>
<comment type="function">
    <text evidence="1">NDH-1 shuttles electrons from NADH, via FMN and iron-sulfur (Fe-S) centers, to quinones in the respiratory chain. The immediate electron acceptor for the enzyme in this species is believed to be ubiquinone. Couples the redox reaction to proton translocation (for every two electrons transferred, four hydrogen ions are translocated across the cytoplasmic membrane), and thus conserves the redox energy in a proton gradient. This subunit may bind ubiquinone.</text>
</comment>
<comment type="catalytic activity">
    <reaction evidence="1">
        <text>a quinone + NADH + 5 H(+)(in) = a quinol + NAD(+) + 4 H(+)(out)</text>
        <dbReference type="Rhea" id="RHEA:57888"/>
        <dbReference type="ChEBI" id="CHEBI:15378"/>
        <dbReference type="ChEBI" id="CHEBI:24646"/>
        <dbReference type="ChEBI" id="CHEBI:57540"/>
        <dbReference type="ChEBI" id="CHEBI:57945"/>
        <dbReference type="ChEBI" id="CHEBI:132124"/>
    </reaction>
</comment>
<comment type="subunit">
    <text evidence="1">NDH-1 is composed of 14 different subunits. Subunits NuoA, H, J, K, L, M, N constitute the membrane sector of the complex.</text>
</comment>
<comment type="subcellular location">
    <subcellularLocation>
        <location evidence="1">Cell inner membrane</location>
        <topology evidence="1">Multi-pass membrane protein</topology>
    </subcellularLocation>
</comment>
<comment type="similarity">
    <text evidence="1">Belongs to the complex I subunit 1 family.</text>
</comment>
<evidence type="ECO:0000255" key="1">
    <source>
        <dbReference type="HAMAP-Rule" id="MF_01350"/>
    </source>
</evidence>
<protein>
    <recommendedName>
        <fullName evidence="1">NADH-quinone oxidoreductase subunit H</fullName>
        <ecNumber evidence="1">7.1.1.-</ecNumber>
    </recommendedName>
    <alternativeName>
        <fullName evidence="1">NADH dehydrogenase I subunit H</fullName>
    </alternativeName>
    <alternativeName>
        <fullName evidence="1">NDH-1 subunit H</fullName>
    </alternativeName>
</protein>
<reference key="1">
    <citation type="submission" date="2008-05" db="EMBL/GenBank/DDBJ databases">
        <title>Complete sequence of chromosome 1 of Ralstonia pickettii 12J.</title>
        <authorList>
            <person name="Lucas S."/>
            <person name="Copeland A."/>
            <person name="Lapidus A."/>
            <person name="Glavina del Rio T."/>
            <person name="Dalin E."/>
            <person name="Tice H."/>
            <person name="Bruce D."/>
            <person name="Goodwin L."/>
            <person name="Pitluck S."/>
            <person name="Meincke L."/>
            <person name="Brettin T."/>
            <person name="Detter J.C."/>
            <person name="Han C."/>
            <person name="Kuske C.R."/>
            <person name="Schmutz J."/>
            <person name="Larimer F."/>
            <person name="Land M."/>
            <person name="Hauser L."/>
            <person name="Kyrpides N."/>
            <person name="Mikhailova N."/>
            <person name="Marsh T."/>
            <person name="Richardson P."/>
        </authorList>
    </citation>
    <scope>NUCLEOTIDE SEQUENCE [LARGE SCALE GENOMIC DNA]</scope>
    <source>
        <strain>12J</strain>
    </source>
</reference>
<dbReference type="EC" id="7.1.1.-" evidence="1"/>
<dbReference type="EMBL" id="CP001068">
    <property type="protein sequence ID" value="ACD27341.1"/>
    <property type="molecule type" value="Genomic_DNA"/>
</dbReference>
<dbReference type="SMR" id="B2U7Q4"/>
<dbReference type="STRING" id="402626.Rpic_2207"/>
<dbReference type="KEGG" id="rpi:Rpic_2207"/>
<dbReference type="PATRIC" id="fig|402626.5.peg.3354"/>
<dbReference type="eggNOG" id="COG1005">
    <property type="taxonomic scope" value="Bacteria"/>
</dbReference>
<dbReference type="HOGENOM" id="CLU_015134_0_1_4"/>
<dbReference type="GO" id="GO:0005886">
    <property type="term" value="C:plasma membrane"/>
    <property type="evidence" value="ECO:0007669"/>
    <property type="project" value="UniProtKB-SubCell"/>
</dbReference>
<dbReference type="GO" id="GO:0003954">
    <property type="term" value="F:NADH dehydrogenase activity"/>
    <property type="evidence" value="ECO:0007669"/>
    <property type="project" value="TreeGrafter"/>
</dbReference>
<dbReference type="GO" id="GO:0016655">
    <property type="term" value="F:oxidoreductase activity, acting on NAD(P)H, quinone or similar compound as acceptor"/>
    <property type="evidence" value="ECO:0007669"/>
    <property type="project" value="UniProtKB-UniRule"/>
</dbReference>
<dbReference type="GO" id="GO:0048038">
    <property type="term" value="F:quinone binding"/>
    <property type="evidence" value="ECO:0007669"/>
    <property type="project" value="UniProtKB-KW"/>
</dbReference>
<dbReference type="GO" id="GO:0009060">
    <property type="term" value="P:aerobic respiration"/>
    <property type="evidence" value="ECO:0007669"/>
    <property type="project" value="TreeGrafter"/>
</dbReference>
<dbReference type="HAMAP" id="MF_01350">
    <property type="entry name" value="NDH1_NuoH"/>
    <property type="match status" value="1"/>
</dbReference>
<dbReference type="InterPro" id="IPR001694">
    <property type="entry name" value="NADH_UbQ_OxRdtase_su1/FPO"/>
</dbReference>
<dbReference type="InterPro" id="IPR018086">
    <property type="entry name" value="NADH_UbQ_OxRdtase_su1_CS"/>
</dbReference>
<dbReference type="NCBIfam" id="NF004741">
    <property type="entry name" value="PRK06076.1-2"/>
    <property type="match status" value="1"/>
</dbReference>
<dbReference type="NCBIfam" id="NF004742">
    <property type="entry name" value="PRK06076.1-3"/>
    <property type="match status" value="1"/>
</dbReference>
<dbReference type="PANTHER" id="PTHR11432">
    <property type="entry name" value="NADH DEHYDROGENASE SUBUNIT 1"/>
    <property type="match status" value="1"/>
</dbReference>
<dbReference type="PANTHER" id="PTHR11432:SF3">
    <property type="entry name" value="NADH-UBIQUINONE OXIDOREDUCTASE CHAIN 1"/>
    <property type="match status" value="1"/>
</dbReference>
<dbReference type="Pfam" id="PF00146">
    <property type="entry name" value="NADHdh"/>
    <property type="match status" value="1"/>
</dbReference>
<dbReference type="PROSITE" id="PS00668">
    <property type="entry name" value="COMPLEX1_ND1_2"/>
    <property type="match status" value="1"/>
</dbReference>
<proteinExistence type="inferred from homology"/>
<sequence length="354" mass="39442">MIESITSFGTATFGGWWPLVWTLVRAVCIILPLLLCVAYLILWERKLIGWMHVRLGPNRVGPMGLLQPIADVLKLLLKEVMVPSAVSRGMYIIAPLMVLMPAVAIWAVIPFQAEAMVSNINAGLLYVMAISSVGVYGVILAGWASNSKYAFLGAMRASAQMISYEIAMGFALVTVLMVTGSLNLSDIVNSQNRGFFAGHGINILSWNWLPLLPMFGVYFISGVAETNRHPFDVVEGESEIVAGHMIEYSGMAFALFFLAEYINMIVISALTATLFLGGWASPIDAPVLNWIPGFFWLLIKVFLLLSVFIWLRASFPRYRYDQIMRLGWKIFIPLTVGWLVVVAIWLVSPWNIWK</sequence>